<organism>
    <name type="scientific">Methanococcus maripaludis (strain DSM 14266 / JCM 13030 / NBRC 101832 / S2 / LL)</name>
    <dbReference type="NCBI Taxonomy" id="267377"/>
    <lineage>
        <taxon>Archaea</taxon>
        <taxon>Methanobacteriati</taxon>
        <taxon>Methanobacteriota</taxon>
        <taxon>Methanomada group</taxon>
        <taxon>Methanococci</taxon>
        <taxon>Methanococcales</taxon>
        <taxon>Methanococcaceae</taxon>
        <taxon>Methanococcus</taxon>
    </lineage>
</organism>
<evidence type="ECO:0000255" key="1">
    <source>
        <dbReference type="HAMAP-Rule" id="MF_00668"/>
    </source>
</evidence>
<protein>
    <recommendedName>
        <fullName evidence="1">6-carboxyhexanoate--CoA ligase</fullName>
        <ecNumber evidence="1">6.2.1.14</ecNumber>
    </recommendedName>
    <alternativeName>
        <fullName evidence="1">Pimeloyl-CoA synthase</fullName>
    </alternativeName>
</protein>
<dbReference type="EC" id="6.2.1.14" evidence="1"/>
<dbReference type="EMBL" id="BX950229">
    <property type="protein sequence ID" value="CAF31131.1"/>
    <property type="molecule type" value="Genomic_DNA"/>
</dbReference>
<dbReference type="RefSeq" id="WP_011171519.1">
    <property type="nucleotide sequence ID" value="NC_005791.1"/>
</dbReference>
<dbReference type="SMR" id="Q6LWX9"/>
<dbReference type="STRING" id="267377.MMP1575"/>
<dbReference type="EnsemblBacteria" id="CAF31131">
    <property type="protein sequence ID" value="CAF31131"/>
    <property type="gene ID" value="MMP1575"/>
</dbReference>
<dbReference type="GeneID" id="2761285"/>
<dbReference type="KEGG" id="mmp:MMP1575"/>
<dbReference type="PATRIC" id="fig|267377.15.peg.1613"/>
<dbReference type="eggNOG" id="arCOG05075">
    <property type="taxonomic scope" value="Archaea"/>
</dbReference>
<dbReference type="HOGENOM" id="CLU_076858_0_0_2"/>
<dbReference type="OrthoDB" id="65815at2157"/>
<dbReference type="UniPathway" id="UPA00999">
    <property type="reaction ID" value="UER00351"/>
</dbReference>
<dbReference type="Proteomes" id="UP000000590">
    <property type="component" value="Chromosome"/>
</dbReference>
<dbReference type="GO" id="GO:0042410">
    <property type="term" value="F:6-carboxyhexanoate-CoA ligase activity"/>
    <property type="evidence" value="ECO:0007669"/>
    <property type="project" value="UniProtKB-UniRule"/>
</dbReference>
<dbReference type="GO" id="GO:0005524">
    <property type="term" value="F:ATP binding"/>
    <property type="evidence" value="ECO:0007669"/>
    <property type="project" value="UniProtKB-KW"/>
</dbReference>
<dbReference type="GO" id="GO:0000287">
    <property type="term" value="F:magnesium ion binding"/>
    <property type="evidence" value="ECO:0007669"/>
    <property type="project" value="UniProtKB-UniRule"/>
</dbReference>
<dbReference type="GO" id="GO:0009102">
    <property type="term" value="P:biotin biosynthetic process"/>
    <property type="evidence" value="ECO:0007669"/>
    <property type="project" value="UniProtKB-UniRule"/>
</dbReference>
<dbReference type="HAMAP" id="MF_00668">
    <property type="entry name" value="BioW"/>
    <property type="match status" value="1"/>
</dbReference>
<dbReference type="InterPro" id="IPR005499">
    <property type="entry name" value="BioW"/>
</dbReference>
<dbReference type="NCBIfam" id="NF002360">
    <property type="entry name" value="PRK01322.1"/>
    <property type="match status" value="1"/>
</dbReference>
<dbReference type="Pfam" id="PF03744">
    <property type="entry name" value="BioW"/>
    <property type="match status" value="1"/>
</dbReference>
<comment type="function">
    <text evidence="1">Catalyzes the transformation of pimelate into pimeloyl-CoA with concomitant hydrolysis of ATP to AMP.</text>
</comment>
<comment type="catalytic activity">
    <reaction evidence="1">
        <text>heptanedioate + ATP + CoA = 6-carboxyhexanoyl-CoA + AMP + diphosphate</text>
        <dbReference type="Rhea" id="RHEA:14781"/>
        <dbReference type="ChEBI" id="CHEBI:30616"/>
        <dbReference type="ChEBI" id="CHEBI:33019"/>
        <dbReference type="ChEBI" id="CHEBI:36165"/>
        <dbReference type="ChEBI" id="CHEBI:57287"/>
        <dbReference type="ChEBI" id="CHEBI:57360"/>
        <dbReference type="ChEBI" id="CHEBI:456215"/>
        <dbReference type="EC" id="6.2.1.14"/>
    </reaction>
</comment>
<comment type="cofactor">
    <cofactor evidence="1">
        <name>Mg(2+)</name>
        <dbReference type="ChEBI" id="CHEBI:18420"/>
    </cofactor>
</comment>
<comment type="pathway">
    <text evidence="1">Metabolic intermediate metabolism; pimeloyl-CoA biosynthesis; pimeloyl-CoA from pimelate: step 1/1.</text>
</comment>
<comment type="subunit">
    <text evidence="1">Homodimer.</text>
</comment>
<comment type="similarity">
    <text evidence="1">Belongs to the BioW family.</text>
</comment>
<proteinExistence type="inferred from homology"/>
<gene>
    <name evidence="1" type="primary">bioW</name>
    <name type="ordered locus">MMP1575</name>
</gene>
<name>BIOW_METMP</name>
<feature type="chain" id="PRO_0000412102" description="6-carboxyhexanoate--CoA ligase">
    <location>
        <begin position="1"/>
        <end position="244"/>
    </location>
</feature>
<accession>Q6LWX9</accession>
<sequence length="244" mass="27453">MFSLKMRASSNGNHVSGAERLVKEEQIEEISSELIKRAMNHENGVPDFINLKVEKVTENINYIEHLKIKTINSNSKETSREFAINILKKELENYFLKNGKDTKKIDELIDSAFKIIDAGNMRGAAILDLDGNRLEKSSDRGIRVRNIDTAEELSKKILKDGSLTERTVDAIAIATKVVNCDIIAELCTSDNFSYTTGYVATKDGYFRILNLKDSGQVGGRVFFAESSDIDELYDKLENMPVIVY</sequence>
<keyword id="KW-0067">ATP-binding</keyword>
<keyword id="KW-0093">Biotin biosynthesis</keyword>
<keyword id="KW-0436">Ligase</keyword>
<keyword id="KW-0460">Magnesium</keyword>
<keyword id="KW-0547">Nucleotide-binding</keyword>
<keyword id="KW-1185">Reference proteome</keyword>
<reference key="1">
    <citation type="journal article" date="2004" name="J. Bacteriol.">
        <title>Complete genome sequence of the genetically tractable hydrogenotrophic methanogen Methanococcus maripaludis.</title>
        <authorList>
            <person name="Hendrickson E.L."/>
            <person name="Kaul R."/>
            <person name="Zhou Y."/>
            <person name="Bovee D."/>
            <person name="Chapman P."/>
            <person name="Chung J."/>
            <person name="Conway de Macario E."/>
            <person name="Dodsworth J.A."/>
            <person name="Gillett W."/>
            <person name="Graham D.E."/>
            <person name="Hackett M."/>
            <person name="Haydock A.K."/>
            <person name="Kang A."/>
            <person name="Land M.L."/>
            <person name="Levy R."/>
            <person name="Lie T.J."/>
            <person name="Major T.A."/>
            <person name="Moore B.C."/>
            <person name="Porat I."/>
            <person name="Palmeiri A."/>
            <person name="Rouse G."/>
            <person name="Saenphimmachak C."/>
            <person name="Soell D."/>
            <person name="Van Dien S."/>
            <person name="Wang T."/>
            <person name="Whitman W.B."/>
            <person name="Xia Q."/>
            <person name="Zhang Y."/>
            <person name="Larimer F.W."/>
            <person name="Olson M.V."/>
            <person name="Leigh J.A."/>
        </authorList>
    </citation>
    <scope>NUCLEOTIDE SEQUENCE [LARGE SCALE GENOMIC DNA]</scope>
    <source>
        <strain>DSM 14266 / JCM 13030 / NBRC 101832 / S2 / LL</strain>
    </source>
</reference>